<accession>Q1J5Q6</accession>
<organism>
    <name type="scientific">Streptococcus pyogenes serotype M4 (strain MGAS10750)</name>
    <dbReference type="NCBI Taxonomy" id="370554"/>
    <lineage>
        <taxon>Bacteria</taxon>
        <taxon>Bacillati</taxon>
        <taxon>Bacillota</taxon>
        <taxon>Bacilli</taxon>
        <taxon>Lactobacillales</taxon>
        <taxon>Streptococcaceae</taxon>
        <taxon>Streptococcus</taxon>
    </lineage>
</organism>
<evidence type="ECO:0000250" key="1"/>
<evidence type="ECO:0000255" key="2">
    <source>
        <dbReference type="HAMAP-Rule" id="MF_01109"/>
    </source>
</evidence>
<feature type="chain" id="PRO_1000065126" description="Ornithine carbamoyltransferase">
    <location>
        <begin position="1"/>
        <end position="337"/>
    </location>
</feature>
<feature type="binding site" evidence="2">
    <location>
        <begin position="57"/>
        <end position="60"/>
    </location>
    <ligand>
        <name>carbamoyl phosphate</name>
        <dbReference type="ChEBI" id="CHEBI:58228"/>
    </ligand>
</feature>
<feature type="binding site" evidence="2">
    <location>
        <position position="84"/>
    </location>
    <ligand>
        <name>carbamoyl phosphate</name>
        <dbReference type="ChEBI" id="CHEBI:58228"/>
    </ligand>
</feature>
<feature type="binding site" evidence="2">
    <location>
        <position position="108"/>
    </location>
    <ligand>
        <name>carbamoyl phosphate</name>
        <dbReference type="ChEBI" id="CHEBI:58228"/>
    </ligand>
</feature>
<feature type="binding site" evidence="2">
    <location>
        <begin position="135"/>
        <end position="138"/>
    </location>
    <ligand>
        <name>carbamoyl phosphate</name>
        <dbReference type="ChEBI" id="CHEBI:58228"/>
    </ligand>
</feature>
<feature type="binding site" evidence="2">
    <location>
        <position position="167"/>
    </location>
    <ligand>
        <name>L-ornithine</name>
        <dbReference type="ChEBI" id="CHEBI:46911"/>
    </ligand>
</feature>
<feature type="binding site" evidence="2">
    <location>
        <position position="231"/>
    </location>
    <ligand>
        <name>L-ornithine</name>
        <dbReference type="ChEBI" id="CHEBI:46911"/>
    </ligand>
</feature>
<feature type="binding site" evidence="2">
    <location>
        <begin position="235"/>
        <end position="236"/>
    </location>
    <ligand>
        <name>L-ornithine</name>
        <dbReference type="ChEBI" id="CHEBI:46911"/>
    </ligand>
</feature>
<feature type="binding site" evidence="2">
    <location>
        <begin position="272"/>
        <end position="273"/>
    </location>
    <ligand>
        <name>carbamoyl phosphate</name>
        <dbReference type="ChEBI" id="CHEBI:58228"/>
    </ligand>
</feature>
<feature type="binding site" evidence="2">
    <location>
        <position position="317"/>
    </location>
    <ligand>
        <name>carbamoyl phosphate</name>
        <dbReference type="ChEBI" id="CHEBI:58228"/>
    </ligand>
</feature>
<keyword id="KW-0056">Arginine metabolism</keyword>
<keyword id="KW-0963">Cytoplasm</keyword>
<keyword id="KW-0808">Transferase</keyword>
<sequence length="337" mass="37897">MTQVFQGRSFLAEKDFTRAELEYLIDFSAHLKDLKKRGVPHHYLEGKNIALLFEKTSTRTRAAFTTAAIDLGAHPEYLGANDIQLGKKESTEDTAKVLGRMFDGIEFRGFSQRMVEELAEFSGVPVWNGLTDEWHPTQMLADYLTVKENFGKLEGLTLVYCGDGRNNVANSLLVTGAILGVNVHIFSPKELFPEEEIVTLAEGYAKESGARILITEDADEAVKGADVLYTDVWVSMGEEDKFKERVELLQPYQVNMDLVQKAGNDKLIFLHCLPAFHDTNTVYGKDVAEKFGVKEMEVTDEVFRSKYARHFDQAENRMHTIKAVMAATLGNLFIPKV</sequence>
<protein>
    <recommendedName>
        <fullName evidence="2">Ornithine carbamoyltransferase</fullName>
        <shortName evidence="2">OTCase</shortName>
        <ecNumber evidence="2">2.1.3.3</ecNumber>
    </recommendedName>
</protein>
<comment type="function">
    <text evidence="1">Reversibly catalyzes the transfer of the carbamoyl group from carbamoyl phosphate (CP) to the N(epsilon) atom of ornithine (ORN) to produce L-citrulline.</text>
</comment>
<comment type="catalytic activity">
    <reaction evidence="2">
        <text>carbamoyl phosphate + L-ornithine = L-citrulline + phosphate + H(+)</text>
        <dbReference type="Rhea" id="RHEA:19513"/>
        <dbReference type="ChEBI" id="CHEBI:15378"/>
        <dbReference type="ChEBI" id="CHEBI:43474"/>
        <dbReference type="ChEBI" id="CHEBI:46911"/>
        <dbReference type="ChEBI" id="CHEBI:57743"/>
        <dbReference type="ChEBI" id="CHEBI:58228"/>
        <dbReference type="EC" id="2.1.3.3"/>
    </reaction>
</comment>
<comment type="pathway">
    <text evidence="2">Amino-acid degradation; L-arginine degradation via ADI pathway; carbamoyl phosphate from L-arginine: step 2/2.</text>
</comment>
<comment type="subcellular location">
    <subcellularLocation>
        <location evidence="2">Cytoplasm</location>
    </subcellularLocation>
</comment>
<comment type="similarity">
    <text evidence="2">Belongs to the aspartate/ornithine carbamoyltransferase superfamily. OTCase family.</text>
</comment>
<reference key="1">
    <citation type="journal article" date="2006" name="Proc. Natl. Acad. Sci. U.S.A.">
        <title>Molecular genetic anatomy of inter- and intraserotype variation in the human bacterial pathogen group A Streptococcus.</title>
        <authorList>
            <person name="Beres S.B."/>
            <person name="Richter E.W."/>
            <person name="Nagiec M.J."/>
            <person name="Sumby P."/>
            <person name="Porcella S.F."/>
            <person name="DeLeo F.R."/>
            <person name="Musser J.M."/>
        </authorList>
    </citation>
    <scope>NUCLEOTIDE SEQUENCE [LARGE SCALE GENOMIC DNA]</scope>
    <source>
        <strain>MGAS10750</strain>
    </source>
</reference>
<gene>
    <name evidence="2" type="primary">arcB</name>
    <name type="ordered locus">MGAS10750_Spy1380</name>
</gene>
<name>OTC_STRPF</name>
<dbReference type="EC" id="2.1.3.3" evidence="2"/>
<dbReference type="EMBL" id="CP000262">
    <property type="protein sequence ID" value="ABF38330.1"/>
    <property type="molecule type" value="Genomic_DNA"/>
</dbReference>
<dbReference type="SMR" id="Q1J5Q6"/>
<dbReference type="KEGG" id="spi:MGAS10750_Spy1380"/>
<dbReference type="HOGENOM" id="CLU_043846_3_1_9"/>
<dbReference type="UniPathway" id="UPA00254">
    <property type="reaction ID" value="UER00365"/>
</dbReference>
<dbReference type="Proteomes" id="UP000002434">
    <property type="component" value="Chromosome"/>
</dbReference>
<dbReference type="GO" id="GO:0005737">
    <property type="term" value="C:cytoplasm"/>
    <property type="evidence" value="ECO:0007669"/>
    <property type="project" value="UniProtKB-SubCell"/>
</dbReference>
<dbReference type="GO" id="GO:0016597">
    <property type="term" value="F:amino acid binding"/>
    <property type="evidence" value="ECO:0007669"/>
    <property type="project" value="InterPro"/>
</dbReference>
<dbReference type="GO" id="GO:0004585">
    <property type="term" value="F:ornithine carbamoyltransferase activity"/>
    <property type="evidence" value="ECO:0007669"/>
    <property type="project" value="UniProtKB-UniRule"/>
</dbReference>
<dbReference type="GO" id="GO:0042450">
    <property type="term" value="P:arginine biosynthetic process via ornithine"/>
    <property type="evidence" value="ECO:0007669"/>
    <property type="project" value="TreeGrafter"/>
</dbReference>
<dbReference type="GO" id="GO:0019547">
    <property type="term" value="P:arginine catabolic process to ornithine"/>
    <property type="evidence" value="ECO:0007669"/>
    <property type="project" value="UniProtKB-UniRule"/>
</dbReference>
<dbReference type="GO" id="GO:0019240">
    <property type="term" value="P:citrulline biosynthetic process"/>
    <property type="evidence" value="ECO:0007669"/>
    <property type="project" value="TreeGrafter"/>
</dbReference>
<dbReference type="FunFam" id="3.40.50.1370:FF:000004">
    <property type="entry name" value="Ornithine carbamoyltransferase"/>
    <property type="match status" value="1"/>
</dbReference>
<dbReference type="Gene3D" id="3.40.50.1370">
    <property type="entry name" value="Aspartate/ornithine carbamoyltransferase"/>
    <property type="match status" value="2"/>
</dbReference>
<dbReference type="HAMAP" id="MF_01109">
    <property type="entry name" value="OTCase"/>
    <property type="match status" value="1"/>
</dbReference>
<dbReference type="InterPro" id="IPR006132">
    <property type="entry name" value="Asp/Orn_carbamoyltranf_P-bd"/>
</dbReference>
<dbReference type="InterPro" id="IPR006130">
    <property type="entry name" value="Asp/Orn_carbamoylTrfase"/>
</dbReference>
<dbReference type="InterPro" id="IPR036901">
    <property type="entry name" value="Asp/Orn_carbamoylTrfase_sf"/>
</dbReference>
<dbReference type="InterPro" id="IPR006131">
    <property type="entry name" value="Asp_carbamoyltransf_Asp/Orn-bd"/>
</dbReference>
<dbReference type="InterPro" id="IPR002292">
    <property type="entry name" value="Orn/put_carbamltrans"/>
</dbReference>
<dbReference type="InterPro" id="IPR024904">
    <property type="entry name" value="OTCase_ArgI"/>
</dbReference>
<dbReference type="NCBIfam" id="TIGR00658">
    <property type="entry name" value="orni_carb_tr"/>
    <property type="match status" value="1"/>
</dbReference>
<dbReference type="NCBIfam" id="NF001986">
    <property type="entry name" value="PRK00779.1"/>
    <property type="match status" value="1"/>
</dbReference>
<dbReference type="PANTHER" id="PTHR45753:SF1">
    <property type="entry name" value="ORNITHINE CARBAMOYLTRANSFERASE, CATABOLIC"/>
    <property type="match status" value="1"/>
</dbReference>
<dbReference type="PANTHER" id="PTHR45753">
    <property type="entry name" value="ORNITHINE CARBAMOYLTRANSFERASE, MITOCHONDRIAL"/>
    <property type="match status" value="1"/>
</dbReference>
<dbReference type="Pfam" id="PF00185">
    <property type="entry name" value="OTCace"/>
    <property type="match status" value="1"/>
</dbReference>
<dbReference type="Pfam" id="PF02729">
    <property type="entry name" value="OTCace_N"/>
    <property type="match status" value="1"/>
</dbReference>
<dbReference type="PRINTS" id="PR00100">
    <property type="entry name" value="AOTCASE"/>
</dbReference>
<dbReference type="PRINTS" id="PR00102">
    <property type="entry name" value="OTCASE"/>
</dbReference>
<dbReference type="SUPFAM" id="SSF53671">
    <property type="entry name" value="Aspartate/ornithine carbamoyltransferase"/>
    <property type="match status" value="1"/>
</dbReference>
<dbReference type="PROSITE" id="PS00097">
    <property type="entry name" value="CARBAMOYLTRANSFERASE"/>
    <property type="match status" value="1"/>
</dbReference>
<proteinExistence type="inferred from homology"/>